<gene>
    <name evidence="1" type="primary">rpsD</name>
    <name type="ordered locus">Tgr7_2300</name>
</gene>
<evidence type="ECO:0000255" key="1">
    <source>
        <dbReference type="HAMAP-Rule" id="MF_01306"/>
    </source>
</evidence>
<evidence type="ECO:0000305" key="2"/>
<name>RS4_THISH</name>
<sequence length="206" mass="23621">MARYIGPKCKLSRREGTDLFLKGRGRSLDTKCKLDKAPGQHGDRRARLSDYGLQLREKQKLRRIYGVLERQFRNYYKTASRMKGSTGENLLQLLERRLDNVVYRMGFGATRAEARQLVSHKAIQVNGQAVNIASYQVQPSDVVAVREKAKKQVRIQDSLTLAEQFGFPEWVEVDTKKMEGVFKSIPERSELPAEINESLVVELYSK</sequence>
<proteinExistence type="inferred from homology"/>
<protein>
    <recommendedName>
        <fullName evidence="1">Small ribosomal subunit protein uS4</fullName>
    </recommendedName>
    <alternativeName>
        <fullName evidence="2">30S ribosomal protein S4</fullName>
    </alternativeName>
</protein>
<dbReference type="EMBL" id="CP001339">
    <property type="protein sequence ID" value="ACL73380.1"/>
    <property type="molecule type" value="Genomic_DNA"/>
</dbReference>
<dbReference type="RefSeq" id="WP_012638856.1">
    <property type="nucleotide sequence ID" value="NC_011901.1"/>
</dbReference>
<dbReference type="SMR" id="B8GV34"/>
<dbReference type="STRING" id="396588.Tgr7_2300"/>
<dbReference type="KEGG" id="tgr:Tgr7_2300"/>
<dbReference type="eggNOG" id="COG0522">
    <property type="taxonomic scope" value="Bacteria"/>
</dbReference>
<dbReference type="HOGENOM" id="CLU_092403_0_2_6"/>
<dbReference type="OrthoDB" id="9803672at2"/>
<dbReference type="Proteomes" id="UP000002383">
    <property type="component" value="Chromosome"/>
</dbReference>
<dbReference type="GO" id="GO:0015935">
    <property type="term" value="C:small ribosomal subunit"/>
    <property type="evidence" value="ECO:0007669"/>
    <property type="project" value="InterPro"/>
</dbReference>
<dbReference type="GO" id="GO:0019843">
    <property type="term" value="F:rRNA binding"/>
    <property type="evidence" value="ECO:0007669"/>
    <property type="project" value="UniProtKB-UniRule"/>
</dbReference>
<dbReference type="GO" id="GO:0003735">
    <property type="term" value="F:structural constituent of ribosome"/>
    <property type="evidence" value="ECO:0007669"/>
    <property type="project" value="InterPro"/>
</dbReference>
<dbReference type="GO" id="GO:0042274">
    <property type="term" value="P:ribosomal small subunit biogenesis"/>
    <property type="evidence" value="ECO:0007669"/>
    <property type="project" value="TreeGrafter"/>
</dbReference>
<dbReference type="GO" id="GO:0006412">
    <property type="term" value="P:translation"/>
    <property type="evidence" value="ECO:0007669"/>
    <property type="project" value="UniProtKB-UniRule"/>
</dbReference>
<dbReference type="CDD" id="cd00165">
    <property type="entry name" value="S4"/>
    <property type="match status" value="1"/>
</dbReference>
<dbReference type="FunFam" id="1.10.1050.10:FF:000001">
    <property type="entry name" value="30S ribosomal protein S4"/>
    <property type="match status" value="1"/>
</dbReference>
<dbReference type="FunFam" id="3.10.290.10:FF:000001">
    <property type="entry name" value="30S ribosomal protein S4"/>
    <property type="match status" value="1"/>
</dbReference>
<dbReference type="Gene3D" id="1.10.1050.10">
    <property type="entry name" value="Ribosomal Protein S4 Delta 41, Chain A, domain 1"/>
    <property type="match status" value="1"/>
</dbReference>
<dbReference type="Gene3D" id="3.10.290.10">
    <property type="entry name" value="RNA-binding S4 domain"/>
    <property type="match status" value="1"/>
</dbReference>
<dbReference type="HAMAP" id="MF_01306_B">
    <property type="entry name" value="Ribosomal_uS4_B"/>
    <property type="match status" value="1"/>
</dbReference>
<dbReference type="InterPro" id="IPR022801">
    <property type="entry name" value="Ribosomal_uS4"/>
</dbReference>
<dbReference type="InterPro" id="IPR005709">
    <property type="entry name" value="Ribosomal_uS4_bac-type"/>
</dbReference>
<dbReference type="InterPro" id="IPR018079">
    <property type="entry name" value="Ribosomal_uS4_CS"/>
</dbReference>
<dbReference type="InterPro" id="IPR001912">
    <property type="entry name" value="Ribosomal_uS4_N"/>
</dbReference>
<dbReference type="InterPro" id="IPR002942">
    <property type="entry name" value="S4_RNA-bd"/>
</dbReference>
<dbReference type="InterPro" id="IPR036986">
    <property type="entry name" value="S4_RNA-bd_sf"/>
</dbReference>
<dbReference type="NCBIfam" id="NF003717">
    <property type="entry name" value="PRK05327.1"/>
    <property type="match status" value="1"/>
</dbReference>
<dbReference type="NCBIfam" id="TIGR01017">
    <property type="entry name" value="rpsD_bact"/>
    <property type="match status" value="1"/>
</dbReference>
<dbReference type="PANTHER" id="PTHR11831">
    <property type="entry name" value="30S 40S RIBOSOMAL PROTEIN"/>
    <property type="match status" value="1"/>
</dbReference>
<dbReference type="PANTHER" id="PTHR11831:SF4">
    <property type="entry name" value="SMALL RIBOSOMAL SUBUNIT PROTEIN US4M"/>
    <property type="match status" value="1"/>
</dbReference>
<dbReference type="Pfam" id="PF00163">
    <property type="entry name" value="Ribosomal_S4"/>
    <property type="match status" value="1"/>
</dbReference>
<dbReference type="Pfam" id="PF01479">
    <property type="entry name" value="S4"/>
    <property type="match status" value="1"/>
</dbReference>
<dbReference type="SMART" id="SM01390">
    <property type="entry name" value="Ribosomal_S4"/>
    <property type="match status" value="1"/>
</dbReference>
<dbReference type="SMART" id="SM00363">
    <property type="entry name" value="S4"/>
    <property type="match status" value="1"/>
</dbReference>
<dbReference type="SUPFAM" id="SSF55174">
    <property type="entry name" value="Alpha-L RNA-binding motif"/>
    <property type="match status" value="1"/>
</dbReference>
<dbReference type="PROSITE" id="PS00632">
    <property type="entry name" value="RIBOSOMAL_S4"/>
    <property type="match status" value="1"/>
</dbReference>
<dbReference type="PROSITE" id="PS50889">
    <property type="entry name" value="S4"/>
    <property type="match status" value="1"/>
</dbReference>
<reference key="1">
    <citation type="journal article" date="2011" name="Stand. Genomic Sci.">
        <title>Complete genome sequence of 'Thioalkalivibrio sulfidophilus' HL-EbGr7.</title>
        <authorList>
            <person name="Muyzer G."/>
            <person name="Sorokin D.Y."/>
            <person name="Mavromatis K."/>
            <person name="Lapidus A."/>
            <person name="Clum A."/>
            <person name="Ivanova N."/>
            <person name="Pati A."/>
            <person name="d'Haeseleer P."/>
            <person name="Woyke T."/>
            <person name="Kyrpides N.C."/>
        </authorList>
    </citation>
    <scope>NUCLEOTIDE SEQUENCE [LARGE SCALE GENOMIC DNA]</scope>
    <source>
        <strain>HL-EbGR7</strain>
    </source>
</reference>
<keyword id="KW-1185">Reference proteome</keyword>
<keyword id="KW-0687">Ribonucleoprotein</keyword>
<keyword id="KW-0689">Ribosomal protein</keyword>
<keyword id="KW-0694">RNA-binding</keyword>
<keyword id="KW-0699">rRNA-binding</keyword>
<organism>
    <name type="scientific">Thioalkalivibrio sulfidiphilus (strain HL-EbGR7)</name>
    <dbReference type="NCBI Taxonomy" id="396588"/>
    <lineage>
        <taxon>Bacteria</taxon>
        <taxon>Pseudomonadati</taxon>
        <taxon>Pseudomonadota</taxon>
        <taxon>Gammaproteobacteria</taxon>
        <taxon>Chromatiales</taxon>
        <taxon>Ectothiorhodospiraceae</taxon>
        <taxon>Thioalkalivibrio</taxon>
    </lineage>
</organism>
<feature type="chain" id="PRO_1000165434" description="Small ribosomal subunit protein uS4">
    <location>
        <begin position="1"/>
        <end position="206"/>
    </location>
</feature>
<feature type="domain" description="S4 RNA-binding" evidence="1">
    <location>
        <begin position="96"/>
        <end position="157"/>
    </location>
</feature>
<comment type="function">
    <text evidence="1">One of the primary rRNA binding proteins, it binds directly to 16S rRNA where it nucleates assembly of the body of the 30S subunit.</text>
</comment>
<comment type="function">
    <text evidence="1">With S5 and S12 plays an important role in translational accuracy.</text>
</comment>
<comment type="subunit">
    <text evidence="1">Part of the 30S ribosomal subunit. Contacts protein S5. The interaction surface between S4 and S5 is involved in control of translational fidelity.</text>
</comment>
<comment type="similarity">
    <text evidence="1">Belongs to the universal ribosomal protein uS4 family.</text>
</comment>
<accession>B8GV34</accession>